<sequence length="215" mass="24357">MGKVYDWFEERLEIQAIADDITSKYVPPHVNIFYCLGGITLTCFLVQVATGFAMTFYYRPTVTEAFASVQYIMVEVNFGWLIRSIHRWSASMMVLMMILHVFRVYLTGGFKKPRELTWVTGVILAVLTVSFGVTGYSLPWDQIGYWAVKIVTGVPEAIPVIGSPLVELLRGSFSVGQSTLTRFYSLHTFILPFLTAVFMLMHFLMIRKQGISGPL</sequence>
<feature type="chain" id="PRO_1000147334" description="Cytochrome b6">
    <location>
        <begin position="1"/>
        <end position="215"/>
    </location>
</feature>
<feature type="transmembrane region" description="Helical" evidence="1">
    <location>
        <begin position="32"/>
        <end position="52"/>
    </location>
</feature>
<feature type="transmembrane region" description="Helical" evidence="1">
    <location>
        <begin position="90"/>
        <end position="110"/>
    </location>
</feature>
<feature type="transmembrane region" description="Helical" evidence="1">
    <location>
        <begin position="116"/>
        <end position="136"/>
    </location>
</feature>
<feature type="transmembrane region" description="Helical" evidence="1">
    <location>
        <begin position="186"/>
        <end position="206"/>
    </location>
</feature>
<feature type="binding site" description="covalent" evidence="1">
    <location>
        <position position="35"/>
    </location>
    <ligand>
        <name>heme c</name>
        <dbReference type="ChEBI" id="CHEBI:61717"/>
    </ligand>
</feature>
<feature type="binding site" description="axial binding residue" evidence="1">
    <location>
        <position position="86"/>
    </location>
    <ligand>
        <name>heme b</name>
        <dbReference type="ChEBI" id="CHEBI:60344"/>
        <label>2</label>
    </ligand>
    <ligandPart>
        <name>Fe</name>
        <dbReference type="ChEBI" id="CHEBI:18248"/>
    </ligandPart>
</feature>
<feature type="binding site" description="axial binding residue" evidence="1">
    <location>
        <position position="100"/>
    </location>
    <ligand>
        <name>heme b</name>
        <dbReference type="ChEBI" id="CHEBI:60344"/>
        <label>1</label>
    </ligand>
    <ligandPart>
        <name>Fe</name>
        <dbReference type="ChEBI" id="CHEBI:18248"/>
    </ligandPart>
</feature>
<feature type="binding site" description="axial binding residue" evidence="1">
    <location>
        <position position="187"/>
    </location>
    <ligand>
        <name>heme b</name>
        <dbReference type="ChEBI" id="CHEBI:60344"/>
        <label>2</label>
    </ligand>
    <ligandPart>
        <name>Fe</name>
        <dbReference type="ChEBI" id="CHEBI:18248"/>
    </ligandPart>
</feature>
<feature type="binding site" description="axial binding residue" evidence="1">
    <location>
        <position position="202"/>
    </location>
    <ligand>
        <name>heme b</name>
        <dbReference type="ChEBI" id="CHEBI:60344"/>
        <label>1</label>
    </ligand>
    <ligandPart>
        <name>Fe</name>
        <dbReference type="ChEBI" id="CHEBI:18248"/>
    </ligandPart>
</feature>
<gene>
    <name evidence="1" type="primary">petB</name>
</gene>
<proteinExistence type="inferred from homology"/>
<name>CYB6_WELMI</name>
<geneLocation type="chloroplast"/>
<evidence type="ECO:0000255" key="1">
    <source>
        <dbReference type="HAMAP-Rule" id="MF_00633"/>
    </source>
</evidence>
<protein>
    <recommendedName>
        <fullName evidence="1">Cytochrome b6</fullName>
    </recommendedName>
</protein>
<dbReference type="EMBL" id="EU342371">
    <property type="protein sequence ID" value="ABY26819.1"/>
    <property type="molecule type" value="Genomic_DNA"/>
</dbReference>
<dbReference type="EMBL" id="AP009568">
    <property type="protein sequence ID" value="BAH11199.1"/>
    <property type="molecule type" value="Genomic_DNA"/>
</dbReference>
<dbReference type="RefSeq" id="YP_001876606.1">
    <property type="nucleotide sequence ID" value="NC_010654.1"/>
</dbReference>
<dbReference type="SMR" id="B2Y1Y9"/>
<dbReference type="GeneID" id="6276187"/>
<dbReference type="GO" id="GO:0009535">
    <property type="term" value="C:chloroplast thylakoid membrane"/>
    <property type="evidence" value="ECO:0007669"/>
    <property type="project" value="UniProtKB-SubCell"/>
</dbReference>
<dbReference type="GO" id="GO:0045158">
    <property type="term" value="F:electron transporter, transferring electrons within cytochrome b6/f complex of photosystem II activity"/>
    <property type="evidence" value="ECO:0007669"/>
    <property type="project" value="UniProtKB-UniRule"/>
</dbReference>
<dbReference type="GO" id="GO:0046872">
    <property type="term" value="F:metal ion binding"/>
    <property type="evidence" value="ECO:0007669"/>
    <property type="project" value="UniProtKB-KW"/>
</dbReference>
<dbReference type="GO" id="GO:0016491">
    <property type="term" value="F:oxidoreductase activity"/>
    <property type="evidence" value="ECO:0007669"/>
    <property type="project" value="InterPro"/>
</dbReference>
<dbReference type="GO" id="GO:0015979">
    <property type="term" value="P:photosynthesis"/>
    <property type="evidence" value="ECO:0007669"/>
    <property type="project" value="UniProtKB-UniRule"/>
</dbReference>
<dbReference type="GO" id="GO:0022904">
    <property type="term" value="P:respiratory electron transport chain"/>
    <property type="evidence" value="ECO:0007669"/>
    <property type="project" value="InterPro"/>
</dbReference>
<dbReference type="CDD" id="cd00284">
    <property type="entry name" value="Cytochrome_b_N"/>
    <property type="match status" value="1"/>
</dbReference>
<dbReference type="FunFam" id="1.20.810.10:FF:000001">
    <property type="entry name" value="Cytochrome b6"/>
    <property type="match status" value="1"/>
</dbReference>
<dbReference type="Gene3D" id="1.20.810.10">
    <property type="entry name" value="Cytochrome Bc1 Complex, Chain C"/>
    <property type="match status" value="1"/>
</dbReference>
<dbReference type="HAMAP" id="MF_00633">
    <property type="entry name" value="Cytb6_f_cytb6"/>
    <property type="match status" value="1"/>
</dbReference>
<dbReference type="InterPro" id="IPR005797">
    <property type="entry name" value="Cyt_b/b6_N"/>
</dbReference>
<dbReference type="InterPro" id="IPR023530">
    <property type="entry name" value="Cyt_B6_PetB"/>
</dbReference>
<dbReference type="InterPro" id="IPR027387">
    <property type="entry name" value="Cytb/b6-like_sf"/>
</dbReference>
<dbReference type="InterPro" id="IPR048259">
    <property type="entry name" value="Cytochrome_b_N_euk/bac"/>
</dbReference>
<dbReference type="InterPro" id="IPR016174">
    <property type="entry name" value="Di-haem_cyt_TM"/>
</dbReference>
<dbReference type="NCBIfam" id="NF002990">
    <property type="entry name" value="PRK03735.1"/>
    <property type="match status" value="1"/>
</dbReference>
<dbReference type="PANTHER" id="PTHR19271">
    <property type="entry name" value="CYTOCHROME B"/>
    <property type="match status" value="1"/>
</dbReference>
<dbReference type="PANTHER" id="PTHR19271:SF16">
    <property type="entry name" value="CYTOCHROME B"/>
    <property type="match status" value="1"/>
</dbReference>
<dbReference type="Pfam" id="PF00033">
    <property type="entry name" value="Cytochrome_B"/>
    <property type="match status" value="1"/>
</dbReference>
<dbReference type="PIRSF" id="PIRSF000032">
    <property type="entry name" value="Cytochrome_b6"/>
    <property type="match status" value="1"/>
</dbReference>
<dbReference type="SUPFAM" id="SSF81342">
    <property type="entry name" value="Transmembrane di-heme cytochromes"/>
    <property type="match status" value="1"/>
</dbReference>
<dbReference type="PROSITE" id="PS51002">
    <property type="entry name" value="CYTB_NTER"/>
    <property type="match status" value="1"/>
</dbReference>
<organism>
    <name type="scientific">Welwitschia mirabilis</name>
    <name type="common">Tree tumbo</name>
    <name type="synonym">Welwitschia bainesii</name>
    <dbReference type="NCBI Taxonomy" id="3377"/>
    <lineage>
        <taxon>Eukaryota</taxon>
        <taxon>Viridiplantae</taxon>
        <taxon>Streptophyta</taxon>
        <taxon>Embryophyta</taxon>
        <taxon>Tracheophyta</taxon>
        <taxon>Spermatophyta</taxon>
        <taxon>Gnetopsida</taxon>
        <taxon>Gnetidae</taxon>
        <taxon>Welwitschiales</taxon>
        <taxon>Welwitschiaceae</taxon>
        <taxon>Welwitschia</taxon>
    </lineage>
</organism>
<reference key="1">
    <citation type="journal article" date="2008" name="BMC Evol. Biol.">
        <title>The complete plastid genome sequence of Welwitschia mirabilis: an unusually compact plastome with accelerated divergence rates.</title>
        <authorList>
            <person name="McCoy S.R."/>
            <person name="Kuehl J.V."/>
            <person name="Boore J.L."/>
            <person name="Raubeson L.A."/>
        </authorList>
    </citation>
    <scope>NUCLEOTIDE SEQUENCE [LARGE SCALE GENOMIC DNA]</scope>
</reference>
<reference key="2">
    <citation type="journal article" date="2009" name="Mol. Phylogenet. Evol.">
        <title>Evolution of reduced and compact chloroplast genomes (cpDNAs) in gnetophytes: Selection toward a lower-cost strategy.</title>
        <authorList>
            <person name="Wu C.-S."/>
            <person name="Lai Y.-T."/>
            <person name="Lin C.-P."/>
            <person name="Wang Y.-N."/>
            <person name="Chaw S.-M."/>
        </authorList>
    </citation>
    <scope>NUCLEOTIDE SEQUENCE [LARGE SCALE GENOMIC DNA]</scope>
</reference>
<comment type="function">
    <text evidence="1">Component of the cytochrome b6-f complex, which mediates electron transfer between photosystem II (PSII) and photosystem I (PSI), cyclic electron flow around PSI, and state transitions.</text>
</comment>
<comment type="cofactor">
    <cofactor evidence="1">
        <name>heme b</name>
        <dbReference type="ChEBI" id="CHEBI:60344"/>
    </cofactor>
    <text evidence="1">Binds 2 heme b groups non-covalently with two histidine residues as axial ligands.</text>
</comment>
<comment type="cofactor">
    <cofactor evidence="1">
        <name>heme c</name>
        <dbReference type="ChEBI" id="CHEBI:61717"/>
    </cofactor>
    <text evidence="1">Binds one heme group covalently by a single cysteine link with no axial amino acid ligand. This heme was named heme ci.</text>
</comment>
<comment type="subunit">
    <text evidence="1">The 4 large subunits of the cytochrome b6-f complex are cytochrome b6, subunit IV (17 kDa polypeptide, PetD), cytochrome f and the Rieske protein, while the 4 small subunits are PetG, PetL, PetM and PetN. The complex functions as a dimer.</text>
</comment>
<comment type="subcellular location">
    <subcellularLocation>
        <location evidence="1">Plastid</location>
        <location evidence="1">Chloroplast thylakoid membrane</location>
        <topology evidence="1">Multi-pass membrane protein</topology>
    </subcellularLocation>
</comment>
<comment type="miscellaneous">
    <text evidence="1">Heme 1 (or BH or b566) is high-potential and absorbs at about 566 nm, and heme 2 (or BL or b562) is low-potential and absorbs at about 562 nm.</text>
</comment>
<comment type="similarity">
    <text evidence="1">Belongs to the cytochrome b family. PetB subfamily.</text>
</comment>
<keyword id="KW-0150">Chloroplast</keyword>
<keyword id="KW-0249">Electron transport</keyword>
<keyword id="KW-0349">Heme</keyword>
<keyword id="KW-0408">Iron</keyword>
<keyword id="KW-0472">Membrane</keyword>
<keyword id="KW-0479">Metal-binding</keyword>
<keyword id="KW-0602">Photosynthesis</keyword>
<keyword id="KW-0934">Plastid</keyword>
<keyword id="KW-0793">Thylakoid</keyword>
<keyword id="KW-0812">Transmembrane</keyword>
<keyword id="KW-1133">Transmembrane helix</keyword>
<keyword id="KW-0813">Transport</keyword>
<accession>B2Y1Y9</accession>